<protein>
    <recommendedName>
        <fullName>16 kDa protein</fullName>
    </recommendedName>
</protein>
<proteinExistence type="predicted"/>
<organism>
    <name type="scientific">Tobacco rattle virus (strain PLB)</name>
    <dbReference type="NCBI Taxonomy" id="33766"/>
    <lineage>
        <taxon>Viruses</taxon>
        <taxon>Riboviria</taxon>
        <taxon>Orthornavirae</taxon>
        <taxon>Kitrinoviricota</taxon>
        <taxon>Alsuviricetes</taxon>
        <taxon>Martellivirales</taxon>
        <taxon>Virgaviridae</taxon>
        <taxon>Tobravirus</taxon>
        <taxon>Tobacco rattle virus</taxon>
    </lineage>
</organism>
<dbReference type="EMBL" id="J04347">
    <property type="protein sequence ID" value="AAA47080.1"/>
    <property type="molecule type" value="Genomic_RNA"/>
</dbReference>
<dbReference type="PIR" id="C46322">
    <property type="entry name" value="C46322"/>
</dbReference>
<dbReference type="SMR" id="P33776"/>
<sequence>MKALFLVTRRVVSVMLTSCESKLPTWLVSHVGVRKIIVDGLSVLLLTILLLMCIIVVAVVTLKSVVNVLKRGIEKSGNRLNEFELKDRLLRLKSPEIRNPLRRNSKREKSLGHQKDF</sequence>
<feature type="chain" id="PRO_0000222508" description="16 kDa protein">
    <location>
        <begin position="1"/>
        <end position="117"/>
    </location>
</feature>
<accession>P33776</accession>
<reference key="1">
    <citation type="journal article" date="1989" name="Virology">
        <title>Genome structure of tobacco rattle virus strain PLB: further evidence on the occurrence of RNA recombination among tobraviruses.</title>
        <authorList>
            <person name="Angenent G.C."/>
            <person name="Posthumus E."/>
            <person name="Brederode F.T.M."/>
            <person name="Bol J.F."/>
        </authorList>
    </citation>
    <scope>NUCLEOTIDE SEQUENCE [GENOMIC RNA]</scope>
</reference>
<name>V13K_TRVPL</name>
<organismHost>
    <name type="scientific">Beta vulgaris</name>
    <name type="common">Sugar beet</name>
    <dbReference type="NCBI Taxonomy" id="161934"/>
</organismHost>
<organismHost>
    <name type="scientific">Capsicum annuum</name>
    <name type="common">Capsicum pepper</name>
    <dbReference type="NCBI Taxonomy" id="4072"/>
</organismHost>
<organismHost>
    <name type="scientific">Hyacinthus</name>
    <dbReference type="NCBI Taxonomy" id="82024"/>
</organismHost>
<organismHost>
    <name type="scientific">Narcissus pseudonarcissus</name>
    <name type="common">Daffodil</name>
    <dbReference type="NCBI Taxonomy" id="39639"/>
</organismHost>
<organismHost>
    <name type="scientific">Nicotiana tabacum</name>
    <name type="common">Common tobacco</name>
    <dbReference type="NCBI Taxonomy" id="4097"/>
</organismHost>
<organismHost>
    <name type="scientific">Solanum tuberosum</name>
    <name type="common">Potato</name>
    <dbReference type="NCBI Taxonomy" id="4113"/>
</organismHost>
<organismHost>
    <name type="scientific">Spinacia oleracea</name>
    <name type="common">Spinach</name>
    <dbReference type="NCBI Taxonomy" id="3562"/>
</organismHost>
<organismHost>
    <name type="scientific">Stellaria media</name>
    <name type="common">Common chickweed</name>
    <name type="synonym">Alsine media</name>
    <dbReference type="NCBI Taxonomy" id="13274"/>
</organismHost>
<organismHost>
    <name type="scientific">Tulipa</name>
    <dbReference type="NCBI Taxonomy" id="13305"/>
</organismHost>
<organismHost>
    <name type="scientific">Viola arvensis</name>
    <name type="common">European field pansy</name>
    <name type="synonym">Field violet</name>
    <dbReference type="NCBI Taxonomy" id="97415"/>
</organismHost>